<proteinExistence type="inferred from homology"/>
<protein>
    <recommendedName>
        <fullName evidence="1">Putative pterin-4-alpha-carbinolamine dehydratase</fullName>
        <shortName evidence="1">PHS</shortName>
        <ecNumber evidence="1">4.2.1.96</ecNumber>
    </recommendedName>
    <alternativeName>
        <fullName evidence="1">4-alpha-hydroxy-tetrahydropterin dehydratase</fullName>
    </alternativeName>
    <alternativeName>
        <fullName evidence="1">Pterin carbinolamine dehydratase</fullName>
        <shortName evidence="1">PCD</shortName>
    </alternativeName>
</protein>
<dbReference type="EC" id="4.2.1.96" evidence="1"/>
<dbReference type="EMBL" id="CP000115">
    <property type="protein sequence ID" value="ABA06062.1"/>
    <property type="molecule type" value="Genomic_DNA"/>
</dbReference>
<dbReference type="RefSeq" id="WP_011316007.1">
    <property type="nucleotide sequence ID" value="NC_007406.1"/>
</dbReference>
<dbReference type="SMR" id="Q3SNS9"/>
<dbReference type="STRING" id="323098.Nwi_2809"/>
<dbReference type="KEGG" id="nwi:Nwi_2809"/>
<dbReference type="eggNOG" id="COG2154">
    <property type="taxonomic scope" value="Bacteria"/>
</dbReference>
<dbReference type="HOGENOM" id="CLU_081974_3_2_5"/>
<dbReference type="OrthoDB" id="9794987at2"/>
<dbReference type="Proteomes" id="UP000002531">
    <property type="component" value="Chromosome"/>
</dbReference>
<dbReference type="GO" id="GO:0008124">
    <property type="term" value="F:4-alpha-hydroxytetrahydrobiopterin dehydratase activity"/>
    <property type="evidence" value="ECO:0007669"/>
    <property type="project" value="UniProtKB-UniRule"/>
</dbReference>
<dbReference type="GO" id="GO:0006729">
    <property type="term" value="P:tetrahydrobiopterin biosynthetic process"/>
    <property type="evidence" value="ECO:0007669"/>
    <property type="project" value="InterPro"/>
</dbReference>
<dbReference type="CDD" id="cd00914">
    <property type="entry name" value="PCD_DCoH_subfamily_b"/>
    <property type="match status" value="1"/>
</dbReference>
<dbReference type="Gene3D" id="3.30.1360.20">
    <property type="entry name" value="Transcriptional coactivator/pterin dehydratase"/>
    <property type="match status" value="1"/>
</dbReference>
<dbReference type="HAMAP" id="MF_00434">
    <property type="entry name" value="Pterin_4_alpha"/>
    <property type="match status" value="1"/>
</dbReference>
<dbReference type="InterPro" id="IPR036428">
    <property type="entry name" value="PCD_sf"/>
</dbReference>
<dbReference type="InterPro" id="IPR001533">
    <property type="entry name" value="Pterin_deHydtase"/>
</dbReference>
<dbReference type="NCBIfam" id="NF002017">
    <property type="entry name" value="PRK00823.1-2"/>
    <property type="match status" value="1"/>
</dbReference>
<dbReference type="NCBIfam" id="NF002018">
    <property type="entry name" value="PRK00823.1-3"/>
    <property type="match status" value="1"/>
</dbReference>
<dbReference type="NCBIfam" id="NF002020">
    <property type="entry name" value="PRK00823.1-5"/>
    <property type="match status" value="1"/>
</dbReference>
<dbReference type="PANTHER" id="PTHR12599">
    <property type="entry name" value="PTERIN-4-ALPHA-CARBINOLAMINE DEHYDRATASE"/>
    <property type="match status" value="1"/>
</dbReference>
<dbReference type="PANTHER" id="PTHR12599:SF0">
    <property type="entry name" value="PTERIN-4-ALPHA-CARBINOLAMINE DEHYDRATASE"/>
    <property type="match status" value="1"/>
</dbReference>
<dbReference type="Pfam" id="PF01329">
    <property type="entry name" value="Pterin_4a"/>
    <property type="match status" value="1"/>
</dbReference>
<dbReference type="SUPFAM" id="SSF55248">
    <property type="entry name" value="PCD-like"/>
    <property type="match status" value="1"/>
</dbReference>
<accession>Q3SNS9</accession>
<feature type="chain" id="PRO_0000231454" description="Putative pterin-4-alpha-carbinolamine dehydratase">
    <location>
        <begin position="1"/>
        <end position="101"/>
    </location>
</feature>
<comment type="catalytic activity">
    <reaction evidence="1">
        <text>(4aS,6R)-4a-hydroxy-L-erythro-5,6,7,8-tetrahydrobiopterin = (6R)-L-erythro-6,7-dihydrobiopterin + H2O</text>
        <dbReference type="Rhea" id="RHEA:11920"/>
        <dbReference type="ChEBI" id="CHEBI:15377"/>
        <dbReference type="ChEBI" id="CHEBI:15642"/>
        <dbReference type="ChEBI" id="CHEBI:43120"/>
        <dbReference type="EC" id="4.2.1.96"/>
    </reaction>
</comment>
<comment type="similarity">
    <text evidence="1">Belongs to the pterin-4-alpha-carbinolamine dehydratase family.</text>
</comment>
<sequence>MVERFSDEARNTALNELPGWSQVAGREAITRTFTFRDFNEAFGFMARVALVAEKTDHHPEWRNVYRTVEVVLATHDAGGVTERDIRLAEAMNAIARQCGGI</sequence>
<name>PHS_NITWN</name>
<organism>
    <name type="scientific">Nitrobacter winogradskyi (strain ATCC 25391 / DSM 10237 / CIP 104748 / NCIMB 11846 / Nb-255)</name>
    <dbReference type="NCBI Taxonomy" id="323098"/>
    <lineage>
        <taxon>Bacteria</taxon>
        <taxon>Pseudomonadati</taxon>
        <taxon>Pseudomonadota</taxon>
        <taxon>Alphaproteobacteria</taxon>
        <taxon>Hyphomicrobiales</taxon>
        <taxon>Nitrobacteraceae</taxon>
        <taxon>Nitrobacter</taxon>
    </lineage>
</organism>
<keyword id="KW-0456">Lyase</keyword>
<keyword id="KW-1185">Reference proteome</keyword>
<reference key="1">
    <citation type="journal article" date="2006" name="Appl. Environ. Microbiol.">
        <title>Genome sequence of the chemolithoautotrophic nitrite-oxidizing bacterium Nitrobacter winogradskyi Nb-255.</title>
        <authorList>
            <person name="Starkenburg S.R."/>
            <person name="Chain P.S.G."/>
            <person name="Sayavedra-Soto L.A."/>
            <person name="Hauser L."/>
            <person name="Land M.L."/>
            <person name="Larimer F.W."/>
            <person name="Malfatti S.A."/>
            <person name="Klotz M.G."/>
            <person name="Bottomley P.J."/>
            <person name="Arp D.J."/>
            <person name="Hickey W.J."/>
        </authorList>
    </citation>
    <scope>NUCLEOTIDE SEQUENCE [LARGE SCALE GENOMIC DNA]</scope>
    <source>
        <strain>ATCC 25391 / DSM 10237 / CIP 104748 / NCIMB 11846 / Nb-255</strain>
    </source>
</reference>
<gene>
    <name type="ordered locus">Nwi_2809</name>
</gene>
<evidence type="ECO:0000255" key="1">
    <source>
        <dbReference type="HAMAP-Rule" id="MF_00434"/>
    </source>
</evidence>